<keyword id="KW-0378">Hydrolase</keyword>
<keyword id="KW-0511">Multifunctional enzyme</keyword>
<keyword id="KW-0658">Purine biosynthesis</keyword>
<keyword id="KW-0808">Transferase</keyword>
<organism>
    <name type="scientific">Staphylococcus aureus (strain MRSA252)</name>
    <dbReference type="NCBI Taxonomy" id="282458"/>
    <lineage>
        <taxon>Bacteria</taxon>
        <taxon>Bacillati</taxon>
        <taxon>Bacillota</taxon>
        <taxon>Bacilli</taxon>
        <taxon>Bacillales</taxon>
        <taxon>Staphylococcaceae</taxon>
        <taxon>Staphylococcus</taxon>
    </lineage>
</organism>
<sequence length="492" mass="54326">MKKAILSVSNKTGIVEFAKALTQLNYELYSTGGTKRILDEANVPVRSVSDLTHFPEIMDGRVKTLHPAVHGGILADRNKPQHLNELSEQHIDLIDMVVVNLYPFQQTVANPDVTMDEAIENIDIGGPTMLRAAAKNYKHVTTIVHPADYQEVLTRLRNDSLDESYRQSLMIKVFEHTAEYDEAIVRFFKGDKETLRYGENPQQSAYFVRTSNAKHTIAGAKQLHGKQLSYNNIKDADATLALVKKFDTPAAVAVKHMNPCGVGIGDTLEQAFHHAYEADSQSIFGGIVALNRAVTPELAEQLHSIFLEVIIAPKFTDEALNILKQKKNVRLLEIDMTIDSNEEEFVSVSGGYLVQDKDNYVVPKEEMKVVTEVAPTDEQWEAMLLGWKVVPSVKSNAIILSNNKQTVGIGAGQMNRVGAAKIALERAIEINDHVALVSDGFFPMGDTVELAAQHGIKAIIQPGGSIKDQDSIDMANKHGIAMVVTGTRHFKH</sequence>
<feature type="chain" id="PRO_0000192125" description="Bifunctional purine biosynthesis protein PurH">
    <location>
        <begin position="1"/>
        <end position="492"/>
    </location>
</feature>
<feature type="domain" description="MGS-like" evidence="2">
    <location>
        <begin position="1"/>
        <end position="144"/>
    </location>
</feature>
<dbReference type="EC" id="2.1.2.3" evidence="1"/>
<dbReference type="EC" id="3.5.4.10" evidence="1"/>
<dbReference type="EMBL" id="BX571856">
    <property type="protein sequence ID" value="CAG40050.1"/>
    <property type="molecule type" value="Genomic_DNA"/>
</dbReference>
<dbReference type="RefSeq" id="WP_000709288.1">
    <property type="nucleotide sequence ID" value="NC_002952.2"/>
</dbReference>
<dbReference type="SMR" id="Q6GI11"/>
<dbReference type="KEGG" id="sar:SAR1047"/>
<dbReference type="HOGENOM" id="CLU_016316_5_2_9"/>
<dbReference type="UniPathway" id="UPA00074">
    <property type="reaction ID" value="UER00133"/>
</dbReference>
<dbReference type="UniPathway" id="UPA00074">
    <property type="reaction ID" value="UER00135"/>
</dbReference>
<dbReference type="Proteomes" id="UP000000596">
    <property type="component" value="Chromosome"/>
</dbReference>
<dbReference type="GO" id="GO:0005829">
    <property type="term" value="C:cytosol"/>
    <property type="evidence" value="ECO:0007669"/>
    <property type="project" value="TreeGrafter"/>
</dbReference>
<dbReference type="GO" id="GO:0003937">
    <property type="term" value="F:IMP cyclohydrolase activity"/>
    <property type="evidence" value="ECO:0007669"/>
    <property type="project" value="UniProtKB-UniRule"/>
</dbReference>
<dbReference type="GO" id="GO:0004643">
    <property type="term" value="F:phosphoribosylaminoimidazolecarboxamide formyltransferase activity"/>
    <property type="evidence" value="ECO:0007669"/>
    <property type="project" value="UniProtKB-UniRule"/>
</dbReference>
<dbReference type="GO" id="GO:0006189">
    <property type="term" value="P:'de novo' IMP biosynthetic process"/>
    <property type="evidence" value="ECO:0007669"/>
    <property type="project" value="UniProtKB-UniRule"/>
</dbReference>
<dbReference type="CDD" id="cd01421">
    <property type="entry name" value="IMPCH"/>
    <property type="match status" value="1"/>
</dbReference>
<dbReference type="FunFam" id="3.40.140.20:FF:000001">
    <property type="entry name" value="Bifunctional purine biosynthesis protein PurH"/>
    <property type="match status" value="1"/>
</dbReference>
<dbReference type="FunFam" id="3.40.140.20:FF:000002">
    <property type="entry name" value="Bifunctional purine biosynthesis protein PurH"/>
    <property type="match status" value="1"/>
</dbReference>
<dbReference type="FunFam" id="3.40.50.1380:FF:000001">
    <property type="entry name" value="Bifunctional purine biosynthesis protein PurH"/>
    <property type="match status" value="1"/>
</dbReference>
<dbReference type="Gene3D" id="3.40.140.20">
    <property type="match status" value="2"/>
</dbReference>
<dbReference type="Gene3D" id="3.40.50.1380">
    <property type="entry name" value="Methylglyoxal synthase-like domain"/>
    <property type="match status" value="1"/>
</dbReference>
<dbReference type="HAMAP" id="MF_00139">
    <property type="entry name" value="PurH"/>
    <property type="match status" value="1"/>
</dbReference>
<dbReference type="InterPro" id="IPR024051">
    <property type="entry name" value="AICAR_Tfase_dup_dom_sf"/>
</dbReference>
<dbReference type="InterPro" id="IPR016193">
    <property type="entry name" value="Cytidine_deaminase-like"/>
</dbReference>
<dbReference type="InterPro" id="IPR011607">
    <property type="entry name" value="MGS-like_dom"/>
</dbReference>
<dbReference type="InterPro" id="IPR036914">
    <property type="entry name" value="MGS-like_dom_sf"/>
</dbReference>
<dbReference type="InterPro" id="IPR002695">
    <property type="entry name" value="PurH-like"/>
</dbReference>
<dbReference type="NCBIfam" id="NF002049">
    <property type="entry name" value="PRK00881.1"/>
    <property type="match status" value="1"/>
</dbReference>
<dbReference type="NCBIfam" id="TIGR00355">
    <property type="entry name" value="purH"/>
    <property type="match status" value="1"/>
</dbReference>
<dbReference type="PANTHER" id="PTHR11692:SF0">
    <property type="entry name" value="BIFUNCTIONAL PURINE BIOSYNTHESIS PROTEIN ATIC"/>
    <property type="match status" value="1"/>
</dbReference>
<dbReference type="PANTHER" id="PTHR11692">
    <property type="entry name" value="BIFUNCTIONAL PURINE BIOSYNTHESIS PROTEIN PURH"/>
    <property type="match status" value="1"/>
</dbReference>
<dbReference type="Pfam" id="PF01808">
    <property type="entry name" value="AICARFT_IMPCHas"/>
    <property type="match status" value="1"/>
</dbReference>
<dbReference type="Pfam" id="PF02142">
    <property type="entry name" value="MGS"/>
    <property type="match status" value="1"/>
</dbReference>
<dbReference type="PIRSF" id="PIRSF000414">
    <property type="entry name" value="AICARFT_IMPCHas"/>
    <property type="match status" value="1"/>
</dbReference>
<dbReference type="SMART" id="SM00798">
    <property type="entry name" value="AICARFT_IMPCHas"/>
    <property type="match status" value="1"/>
</dbReference>
<dbReference type="SMART" id="SM00851">
    <property type="entry name" value="MGS"/>
    <property type="match status" value="1"/>
</dbReference>
<dbReference type="SUPFAM" id="SSF53927">
    <property type="entry name" value="Cytidine deaminase-like"/>
    <property type="match status" value="1"/>
</dbReference>
<dbReference type="SUPFAM" id="SSF52335">
    <property type="entry name" value="Methylglyoxal synthase-like"/>
    <property type="match status" value="1"/>
</dbReference>
<dbReference type="PROSITE" id="PS51855">
    <property type="entry name" value="MGS"/>
    <property type="match status" value="1"/>
</dbReference>
<proteinExistence type="inferred from homology"/>
<evidence type="ECO:0000255" key="1">
    <source>
        <dbReference type="HAMAP-Rule" id="MF_00139"/>
    </source>
</evidence>
<evidence type="ECO:0000255" key="2">
    <source>
        <dbReference type="PROSITE-ProRule" id="PRU01202"/>
    </source>
</evidence>
<protein>
    <recommendedName>
        <fullName evidence="1">Bifunctional purine biosynthesis protein PurH</fullName>
    </recommendedName>
    <domain>
        <recommendedName>
            <fullName evidence="1">Phosphoribosylaminoimidazolecarboxamide formyltransferase</fullName>
            <ecNumber evidence="1">2.1.2.3</ecNumber>
        </recommendedName>
        <alternativeName>
            <fullName evidence="1">AICAR transformylase</fullName>
        </alternativeName>
    </domain>
    <domain>
        <recommendedName>
            <fullName evidence="1">IMP cyclohydrolase</fullName>
            <ecNumber evidence="1">3.5.4.10</ecNumber>
        </recommendedName>
        <alternativeName>
            <fullName evidence="1">ATIC</fullName>
        </alternativeName>
        <alternativeName>
            <fullName evidence="1">IMP synthase</fullName>
        </alternativeName>
        <alternativeName>
            <fullName evidence="1">Inosinicase</fullName>
        </alternativeName>
    </domain>
</protein>
<reference key="1">
    <citation type="journal article" date="2004" name="Proc. Natl. Acad. Sci. U.S.A.">
        <title>Complete genomes of two clinical Staphylococcus aureus strains: evidence for the rapid evolution of virulence and drug resistance.</title>
        <authorList>
            <person name="Holden M.T.G."/>
            <person name="Feil E.J."/>
            <person name="Lindsay J.A."/>
            <person name="Peacock S.J."/>
            <person name="Day N.P.J."/>
            <person name="Enright M.C."/>
            <person name="Foster T.J."/>
            <person name="Moore C.E."/>
            <person name="Hurst L."/>
            <person name="Atkin R."/>
            <person name="Barron A."/>
            <person name="Bason N."/>
            <person name="Bentley S.D."/>
            <person name="Chillingworth C."/>
            <person name="Chillingworth T."/>
            <person name="Churcher C."/>
            <person name="Clark L."/>
            <person name="Corton C."/>
            <person name="Cronin A."/>
            <person name="Doggett J."/>
            <person name="Dowd L."/>
            <person name="Feltwell T."/>
            <person name="Hance Z."/>
            <person name="Harris B."/>
            <person name="Hauser H."/>
            <person name="Holroyd S."/>
            <person name="Jagels K."/>
            <person name="James K.D."/>
            <person name="Lennard N."/>
            <person name="Line A."/>
            <person name="Mayes R."/>
            <person name="Moule S."/>
            <person name="Mungall K."/>
            <person name="Ormond D."/>
            <person name="Quail M.A."/>
            <person name="Rabbinowitsch E."/>
            <person name="Rutherford K.M."/>
            <person name="Sanders M."/>
            <person name="Sharp S."/>
            <person name="Simmonds M."/>
            <person name="Stevens K."/>
            <person name="Whitehead S."/>
            <person name="Barrell B.G."/>
            <person name="Spratt B.G."/>
            <person name="Parkhill J."/>
        </authorList>
    </citation>
    <scope>NUCLEOTIDE SEQUENCE [LARGE SCALE GENOMIC DNA]</scope>
    <source>
        <strain>MRSA252</strain>
    </source>
</reference>
<accession>Q6GI11</accession>
<comment type="catalytic activity">
    <reaction evidence="1">
        <text>(6R)-10-formyltetrahydrofolate + 5-amino-1-(5-phospho-beta-D-ribosyl)imidazole-4-carboxamide = 5-formamido-1-(5-phospho-D-ribosyl)imidazole-4-carboxamide + (6S)-5,6,7,8-tetrahydrofolate</text>
        <dbReference type="Rhea" id="RHEA:22192"/>
        <dbReference type="ChEBI" id="CHEBI:57453"/>
        <dbReference type="ChEBI" id="CHEBI:58467"/>
        <dbReference type="ChEBI" id="CHEBI:58475"/>
        <dbReference type="ChEBI" id="CHEBI:195366"/>
        <dbReference type="EC" id="2.1.2.3"/>
    </reaction>
</comment>
<comment type="catalytic activity">
    <reaction evidence="1">
        <text>IMP + H2O = 5-formamido-1-(5-phospho-D-ribosyl)imidazole-4-carboxamide</text>
        <dbReference type="Rhea" id="RHEA:18445"/>
        <dbReference type="ChEBI" id="CHEBI:15377"/>
        <dbReference type="ChEBI" id="CHEBI:58053"/>
        <dbReference type="ChEBI" id="CHEBI:58467"/>
        <dbReference type="EC" id="3.5.4.10"/>
    </reaction>
</comment>
<comment type="pathway">
    <text evidence="1">Purine metabolism; IMP biosynthesis via de novo pathway; 5-formamido-1-(5-phospho-D-ribosyl)imidazole-4-carboxamide from 5-amino-1-(5-phospho-D-ribosyl)imidazole-4-carboxamide (10-formyl THF route): step 1/1.</text>
</comment>
<comment type="pathway">
    <text evidence="1">Purine metabolism; IMP biosynthesis via de novo pathway; IMP from 5-formamido-1-(5-phospho-D-ribosyl)imidazole-4-carboxamide: step 1/1.</text>
</comment>
<comment type="domain">
    <text evidence="1">The IMP cyclohydrolase activity resides in the N-terminal region.</text>
</comment>
<comment type="similarity">
    <text evidence="1">Belongs to the PurH family.</text>
</comment>
<name>PUR9_STAAR</name>
<gene>
    <name evidence="1" type="primary">purH</name>
    <name type="ordered locus">SAR1047</name>
</gene>